<protein>
    <recommendedName>
        <fullName evidence="1">Phosphatidylserine decarboxylase proenzyme</fullName>
        <ecNumber evidence="1">4.1.1.65</ecNumber>
    </recommendedName>
    <component>
        <recommendedName>
            <fullName evidence="1">Phosphatidylserine decarboxylase alpha chain</fullName>
        </recommendedName>
    </component>
    <component>
        <recommendedName>
            <fullName evidence="1">Phosphatidylserine decarboxylase beta chain</fullName>
        </recommendedName>
    </component>
</protein>
<evidence type="ECO:0000255" key="1">
    <source>
        <dbReference type="HAMAP-Rule" id="MF_00664"/>
    </source>
</evidence>
<proteinExistence type="inferred from homology"/>
<gene>
    <name evidence="1" type="primary">psd</name>
    <name type="ordered locus">DVU_2979</name>
</gene>
<accession>Q726X7</accession>
<name>PSD_NITV2</name>
<reference key="1">
    <citation type="journal article" date="2004" name="Nat. Biotechnol.">
        <title>The genome sequence of the anaerobic, sulfate-reducing bacterium Desulfovibrio vulgaris Hildenborough.</title>
        <authorList>
            <person name="Heidelberg J.F."/>
            <person name="Seshadri R."/>
            <person name="Haveman S.A."/>
            <person name="Hemme C.L."/>
            <person name="Paulsen I.T."/>
            <person name="Kolonay J.F."/>
            <person name="Eisen J.A."/>
            <person name="Ward N.L."/>
            <person name="Methe B.A."/>
            <person name="Brinkac L.M."/>
            <person name="Daugherty S.C."/>
            <person name="DeBoy R.T."/>
            <person name="Dodson R.J."/>
            <person name="Durkin A.S."/>
            <person name="Madupu R."/>
            <person name="Nelson W.C."/>
            <person name="Sullivan S.A."/>
            <person name="Fouts D.E."/>
            <person name="Haft D.H."/>
            <person name="Selengut J."/>
            <person name="Peterson J.D."/>
            <person name="Davidsen T.M."/>
            <person name="Zafar N."/>
            <person name="Zhou L."/>
            <person name="Radune D."/>
            <person name="Dimitrov G."/>
            <person name="Hance M."/>
            <person name="Tran K."/>
            <person name="Khouri H.M."/>
            <person name="Gill J."/>
            <person name="Utterback T.R."/>
            <person name="Feldblyum T.V."/>
            <person name="Wall J.D."/>
            <person name="Voordouw G."/>
            <person name="Fraser C.M."/>
        </authorList>
    </citation>
    <scope>NUCLEOTIDE SEQUENCE [LARGE SCALE GENOMIC DNA]</scope>
    <source>
        <strain>ATCC 29579 / DSM 644 / CCUG 34227 / NCIMB 8303 / VKM B-1760 / Hildenborough</strain>
    </source>
</reference>
<comment type="function">
    <text evidence="1">Catalyzes the formation of phosphatidylethanolamine (PtdEtn) from phosphatidylserine (PtdSer).</text>
</comment>
<comment type="catalytic activity">
    <reaction evidence="1">
        <text>a 1,2-diacyl-sn-glycero-3-phospho-L-serine + H(+) = a 1,2-diacyl-sn-glycero-3-phosphoethanolamine + CO2</text>
        <dbReference type="Rhea" id="RHEA:20828"/>
        <dbReference type="ChEBI" id="CHEBI:15378"/>
        <dbReference type="ChEBI" id="CHEBI:16526"/>
        <dbReference type="ChEBI" id="CHEBI:57262"/>
        <dbReference type="ChEBI" id="CHEBI:64612"/>
        <dbReference type="EC" id="4.1.1.65"/>
    </reaction>
</comment>
<comment type="cofactor">
    <cofactor evidence="1">
        <name>pyruvate</name>
        <dbReference type="ChEBI" id="CHEBI:15361"/>
    </cofactor>
    <text evidence="1">Binds 1 pyruvoyl group covalently per subunit.</text>
</comment>
<comment type="pathway">
    <text evidence="1">Phospholipid metabolism; phosphatidylethanolamine biosynthesis; phosphatidylethanolamine from CDP-diacylglycerol: step 2/2.</text>
</comment>
<comment type="subunit">
    <text evidence="1">Heterodimer of a large membrane-associated beta subunit and a small pyruvoyl-containing alpha subunit.</text>
</comment>
<comment type="subcellular location">
    <subcellularLocation>
        <location evidence="1">Cell membrane</location>
        <topology evidence="1">Peripheral membrane protein</topology>
    </subcellularLocation>
</comment>
<comment type="PTM">
    <text evidence="1">Is synthesized initially as an inactive proenzyme. Formation of the active enzyme involves a self-maturation process in which the active site pyruvoyl group is generated from an internal serine residue via an autocatalytic post-translational modification. Two non-identical subunits are generated from the proenzyme in this reaction, and the pyruvate is formed at the N-terminus of the alpha chain, which is derived from the carboxyl end of the proenzyme. The post-translation cleavage follows an unusual pathway, termed non-hydrolytic serinolysis, in which the side chain hydroxyl group of the serine supplies its oxygen atom to form the C-terminus of the beta chain, while the remainder of the serine residue undergoes an oxidative deamination to produce ammonia and the pyruvoyl prosthetic group on the alpha chain.</text>
</comment>
<comment type="similarity">
    <text evidence="1">Belongs to the phosphatidylserine decarboxylase family. PSD-A subfamily.</text>
</comment>
<dbReference type="EC" id="4.1.1.65" evidence="1"/>
<dbReference type="EMBL" id="AE017285">
    <property type="protein sequence ID" value="AAS97450.1"/>
    <property type="molecule type" value="Genomic_DNA"/>
</dbReference>
<dbReference type="RefSeq" id="WP_010940238.1">
    <property type="nucleotide sequence ID" value="NC_002937.3"/>
</dbReference>
<dbReference type="RefSeq" id="YP_012190.1">
    <property type="nucleotide sequence ID" value="NC_002937.3"/>
</dbReference>
<dbReference type="SMR" id="Q726X7"/>
<dbReference type="STRING" id="882.DVU_2979"/>
<dbReference type="PaxDb" id="882-DVU_2979"/>
<dbReference type="EnsemblBacteria" id="AAS97450">
    <property type="protein sequence ID" value="AAS97450"/>
    <property type="gene ID" value="DVU_2979"/>
</dbReference>
<dbReference type="KEGG" id="dvu:DVU_2979"/>
<dbReference type="PATRIC" id="fig|882.5.peg.2696"/>
<dbReference type="eggNOG" id="COG0688">
    <property type="taxonomic scope" value="Bacteria"/>
</dbReference>
<dbReference type="HOGENOM" id="CLU_072492_0_0_7"/>
<dbReference type="OrthoDB" id="9790893at2"/>
<dbReference type="PhylomeDB" id="Q726X7"/>
<dbReference type="UniPathway" id="UPA00558">
    <property type="reaction ID" value="UER00616"/>
</dbReference>
<dbReference type="Proteomes" id="UP000002194">
    <property type="component" value="Chromosome"/>
</dbReference>
<dbReference type="GO" id="GO:0005886">
    <property type="term" value="C:plasma membrane"/>
    <property type="evidence" value="ECO:0007669"/>
    <property type="project" value="UniProtKB-SubCell"/>
</dbReference>
<dbReference type="GO" id="GO:0004609">
    <property type="term" value="F:phosphatidylserine decarboxylase activity"/>
    <property type="evidence" value="ECO:0007669"/>
    <property type="project" value="UniProtKB-UniRule"/>
</dbReference>
<dbReference type="GO" id="GO:0006646">
    <property type="term" value="P:phosphatidylethanolamine biosynthetic process"/>
    <property type="evidence" value="ECO:0007669"/>
    <property type="project" value="UniProtKB-UniRule"/>
</dbReference>
<dbReference type="HAMAP" id="MF_00664">
    <property type="entry name" value="PS_decarb_PSD_A"/>
    <property type="match status" value="1"/>
</dbReference>
<dbReference type="InterPro" id="IPR003817">
    <property type="entry name" value="PS_Dcarbxylase"/>
</dbReference>
<dbReference type="InterPro" id="IPR033175">
    <property type="entry name" value="PSD-A"/>
</dbReference>
<dbReference type="NCBIfam" id="NF003678">
    <property type="entry name" value="PRK05305.1-2"/>
    <property type="match status" value="1"/>
</dbReference>
<dbReference type="NCBIfam" id="NF003685">
    <property type="entry name" value="PRK05305.2-5"/>
    <property type="match status" value="1"/>
</dbReference>
<dbReference type="PANTHER" id="PTHR35809">
    <property type="entry name" value="ARCHAETIDYLSERINE DECARBOXYLASE PROENZYME-RELATED"/>
    <property type="match status" value="1"/>
</dbReference>
<dbReference type="PANTHER" id="PTHR35809:SF1">
    <property type="entry name" value="ARCHAETIDYLSERINE DECARBOXYLASE PROENZYME-RELATED"/>
    <property type="match status" value="1"/>
</dbReference>
<dbReference type="Pfam" id="PF02666">
    <property type="entry name" value="PS_Dcarbxylase"/>
    <property type="match status" value="1"/>
</dbReference>
<feature type="chain" id="PRO_0000029771" description="Phosphatidylserine decarboxylase beta chain" evidence="1">
    <location>
        <begin position="1"/>
        <end position="181"/>
    </location>
</feature>
<feature type="chain" id="PRO_0000029772" description="Phosphatidylserine decarboxylase alpha chain" evidence="1">
    <location>
        <begin position="182"/>
        <end position="217"/>
    </location>
</feature>
<feature type="active site" description="Schiff-base intermediate with substrate; via pyruvic acid" evidence="1">
    <location>
        <position position="182"/>
    </location>
</feature>
<feature type="site" description="Cleavage (non-hydrolytic); by autocatalysis" evidence="1">
    <location>
        <begin position="181"/>
        <end position="182"/>
    </location>
</feature>
<feature type="modified residue" description="Pyruvic acid (Ser); by autocatalysis" evidence="1">
    <location>
        <position position="182"/>
    </location>
</feature>
<sequence length="217" mass="23900">MRNPSISITPEGLPAIGLCTLATLTFALIGCWVMAVIFLLLTWFCCHFFRDPERVTPTGAGLAVSPADGRVIRVEPVTDPITGEKRTCVCIFMNVFNVHVNRMPVAGTIRNIVYHPGKFFNAAWDKAATDNERCDYLIEDAEGGKWTMVQIAGLIARRIVCRVDEGDTLTRGERYGMIRFGSRVDLYLPDGYCPTVSVGEHVFAGQTIVARKSPEGA</sequence>
<keyword id="KW-1003">Cell membrane</keyword>
<keyword id="KW-0210">Decarboxylase</keyword>
<keyword id="KW-0444">Lipid biosynthesis</keyword>
<keyword id="KW-0443">Lipid metabolism</keyword>
<keyword id="KW-0456">Lyase</keyword>
<keyword id="KW-0472">Membrane</keyword>
<keyword id="KW-0594">Phospholipid biosynthesis</keyword>
<keyword id="KW-1208">Phospholipid metabolism</keyword>
<keyword id="KW-0670">Pyruvate</keyword>
<keyword id="KW-1185">Reference proteome</keyword>
<keyword id="KW-0865">Zymogen</keyword>
<organism>
    <name type="scientific">Nitratidesulfovibrio vulgaris (strain ATCC 29579 / DSM 644 / CCUG 34227 / NCIMB 8303 / VKM B-1760 / Hildenborough)</name>
    <name type="common">Desulfovibrio vulgaris</name>
    <dbReference type="NCBI Taxonomy" id="882"/>
    <lineage>
        <taxon>Bacteria</taxon>
        <taxon>Pseudomonadati</taxon>
        <taxon>Thermodesulfobacteriota</taxon>
        <taxon>Desulfovibrionia</taxon>
        <taxon>Desulfovibrionales</taxon>
        <taxon>Desulfovibrionaceae</taxon>
        <taxon>Nitratidesulfovibrio</taxon>
    </lineage>
</organism>